<dbReference type="EMBL" id="CP001252">
    <property type="protein sequence ID" value="ACK48533.1"/>
    <property type="molecule type" value="Genomic_DNA"/>
</dbReference>
<dbReference type="RefSeq" id="WP_006083604.1">
    <property type="nucleotide sequence ID" value="NC_011663.1"/>
</dbReference>
<dbReference type="SMR" id="B8EBK9"/>
<dbReference type="GeneID" id="11770555"/>
<dbReference type="KEGG" id="sbp:Sbal223_4060"/>
<dbReference type="HOGENOM" id="CLU_072226_1_1_6"/>
<dbReference type="Proteomes" id="UP000002507">
    <property type="component" value="Chromosome"/>
</dbReference>
<dbReference type="GO" id="GO:0015935">
    <property type="term" value="C:small ribosomal subunit"/>
    <property type="evidence" value="ECO:0007669"/>
    <property type="project" value="InterPro"/>
</dbReference>
<dbReference type="GO" id="GO:0019843">
    <property type="term" value="F:rRNA binding"/>
    <property type="evidence" value="ECO:0007669"/>
    <property type="project" value="UniProtKB-UniRule"/>
</dbReference>
<dbReference type="GO" id="GO:0003735">
    <property type="term" value="F:structural constituent of ribosome"/>
    <property type="evidence" value="ECO:0007669"/>
    <property type="project" value="InterPro"/>
</dbReference>
<dbReference type="GO" id="GO:0000049">
    <property type="term" value="F:tRNA binding"/>
    <property type="evidence" value="ECO:0007669"/>
    <property type="project" value="UniProtKB-UniRule"/>
</dbReference>
<dbReference type="GO" id="GO:0006412">
    <property type="term" value="P:translation"/>
    <property type="evidence" value="ECO:0007669"/>
    <property type="project" value="UniProtKB-UniRule"/>
</dbReference>
<dbReference type="CDD" id="cd14869">
    <property type="entry name" value="uS7_Bacteria"/>
    <property type="match status" value="1"/>
</dbReference>
<dbReference type="FunFam" id="1.10.455.10:FF:000001">
    <property type="entry name" value="30S ribosomal protein S7"/>
    <property type="match status" value="1"/>
</dbReference>
<dbReference type="Gene3D" id="1.10.455.10">
    <property type="entry name" value="Ribosomal protein S7 domain"/>
    <property type="match status" value="1"/>
</dbReference>
<dbReference type="HAMAP" id="MF_00480_B">
    <property type="entry name" value="Ribosomal_uS7_B"/>
    <property type="match status" value="1"/>
</dbReference>
<dbReference type="InterPro" id="IPR000235">
    <property type="entry name" value="Ribosomal_uS7"/>
</dbReference>
<dbReference type="InterPro" id="IPR005717">
    <property type="entry name" value="Ribosomal_uS7_bac/org-type"/>
</dbReference>
<dbReference type="InterPro" id="IPR020606">
    <property type="entry name" value="Ribosomal_uS7_CS"/>
</dbReference>
<dbReference type="InterPro" id="IPR023798">
    <property type="entry name" value="Ribosomal_uS7_dom"/>
</dbReference>
<dbReference type="InterPro" id="IPR036823">
    <property type="entry name" value="Ribosomal_uS7_dom_sf"/>
</dbReference>
<dbReference type="NCBIfam" id="TIGR01029">
    <property type="entry name" value="rpsG_bact"/>
    <property type="match status" value="1"/>
</dbReference>
<dbReference type="PANTHER" id="PTHR11205">
    <property type="entry name" value="RIBOSOMAL PROTEIN S7"/>
    <property type="match status" value="1"/>
</dbReference>
<dbReference type="Pfam" id="PF00177">
    <property type="entry name" value="Ribosomal_S7"/>
    <property type="match status" value="1"/>
</dbReference>
<dbReference type="PIRSF" id="PIRSF002122">
    <property type="entry name" value="RPS7p_RPS7a_RPS5e_RPS7o"/>
    <property type="match status" value="1"/>
</dbReference>
<dbReference type="SUPFAM" id="SSF47973">
    <property type="entry name" value="Ribosomal protein S7"/>
    <property type="match status" value="1"/>
</dbReference>
<dbReference type="PROSITE" id="PS00052">
    <property type="entry name" value="RIBOSOMAL_S7"/>
    <property type="match status" value="1"/>
</dbReference>
<accession>B8EBK9</accession>
<name>RS7_SHEB2</name>
<reference key="1">
    <citation type="submission" date="2008-12" db="EMBL/GenBank/DDBJ databases">
        <title>Complete sequence of chromosome of Shewanella baltica OS223.</title>
        <authorList>
            <consortium name="US DOE Joint Genome Institute"/>
            <person name="Lucas S."/>
            <person name="Copeland A."/>
            <person name="Lapidus A."/>
            <person name="Glavina del Rio T."/>
            <person name="Dalin E."/>
            <person name="Tice H."/>
            <person name="Bruce D."/>
            <person name="Goodwin L."/>
            <person name="Pitluck S."/>
            <person name="Chertkov O."/>
            <person name="Meincke L."/>
            <person name="Brettin T."/>
            <person name="Detter J.C."/>
            <person name="Han C."/>
            <person name="Kuske C.R."/>
            <person name="Larimer F."/>
            <person name="Land M."/>
            <person name="Hauser L."/>
            <person name="Kyrpides N."/>
            <person name="Ovchinnikova G."/>
            <person name="Brettar I."/>
            <person name="Rodrigues J."/>
            <person name="Konstantinidis K."/>
            <person name="Tiedje J."/>
        </authorList>
    </citation>
    <scope>NUCLEOTIDE SEQUENCE [LARGE SCALE GENOMIC DNA]</scope>
    <source>
        <strain>OS223</strain>
    </source>
</reference>
<gene>
    <name evidence="1" type="primary">rpsG</name>
    <name type="ordered locus">Sbal223_4060</name>
</gene>
<protein>
    <recommendedName>
        <fullName evidence="1">Small ribosomal subunit protein uS7</fullName>
    </recommendedName>
    <alternativeName>
        <fullName evidence="2">30S ribosomal protein S7</fullName>
    </alternativeName>
</protein>
<feature type="chain" id="PRO_1000135622" description="Small ribosomal subunit protein uS7">
    <location>
        <begin position="1"/>
        <end position="156"/>
    </location>
</feature>
<proteinExistence type="inferred from homology"/>
<organism>
    <name type="scientific">Shewanella baltica (strain OS223)</name>
    <dbReference type="NCBI Taxonomy" id="407976"/>
    <lineage>
        <taxon>Bacteria</taxon>
        <taxon>Pseudomonadati</taxon>
        <taxon>Pseudomonadota</taxon>
        <taxon>Gammaproteobacteria</taxon>
        <taxon>Alteromonadales</taxon>
        <taxon>Shewanellaceae</taxon>
        <taxon>Shewanella</taxon>
    </lineage>
</organism>
<comment type="function">
    <text evidence="1">One of the primary rRNA binding proteins, it binds directly to 16S rRNA where it nucleates assembly of the head domain of the 30S subunit. Is located at the subunit interface close to the decoding center, probably blocks exit of the E-site tRNA.</text>
</comment>
<comment type="subunit">
    <text evidence="1">Part of the 30S ribosomal subunit. Contacts proteins S9 and S11.</text>
</comment>
<comment type="similarity">
    <text evidence="1">Belongs to the universal ribosomal protein uS7 family.</text>
</comment>
<keyword id="KW-0687">Ribonucleoprotein</keyword>
<keyword id="KW-0689">Ribosomal protein</keyword>
<keyword id="KW-0694">RNA-binding</keyword>
<keyword id="KW-0699">rRNA-binding</keyword>
<keyword id="KW-0820">tRNA-binding</keyword>
<sequence length="156" mass="17764">MPRRRVVGQRKILPDPKFHSELLAKFINVIMQDGKKSTAEKIIYKALDVVAEKKSESHLTILEAALDNVRPSVEVKSRRVGGSTYQVPCEVRPVRRNALAMRWLVEAARKRGEKSMALRLAGEMLDASENKGTAVKKREDVHRMAEANKAFAHYRW</sequence>
<evidence type="ECO:0000255" key="1">
    <source>
        <dbReference type="HAMAP-Rule" id="MF_00480"/>
    </source>
</evidence>
<evidence type="ECO:0000305" key="2"/>